<reference key="1">
    <citation type="journal article" date="2004" name="Environ. Microbiol.">
        <title>The genome of Desulfotalea psychrophila, a sulfate-reducing bacterium from permanently cold Arctic sediments.</title>
        <authorList>
            <person name="Rabus R."/>
            <person name="Ruepp A."/>
            <person name="Frickey T."/>
            <person name="Rattei T."/>
            <person name="Fartmann B."/>
            <person name="Stark M."/>
            <person name="Bauer M."/>
            <person name="Zibat A."/>
            <person name="Lombardot T."/>
            <person name="Becker I."/>
            <person name="Amann J."/>
            <person name="Gellner K."/>
            <person name="Teeling H."/>
            <person name="Leuschner W.D."/>
            <person name="Gloeckner F.-O."/>
            <person name="Lupas A.N."/>
            <person name="Amann R."/>
            <person name="Klenk H.-P."/>
        </authorList>
    </citation>
    <scope>NUCLEOTIDE SEQUENCE [LARGE SCALE GENOMIC DNA]</scope>
    <source>
        <strain>DSM 12343 / LSv54</strain>
    </source>
</reference>
<accession>Q6AQE3</accession>
<proteinExistence type="inferred from homology"/>
<keyword id="KW-0456">Lyase</keyword>
<keyword id="KW-0460">Magnesium</keyword>
<keyword id="KW-0464">Manganese</keyword>
<keyword id="KW-0479">Metal-binding</keyword>
<keyword id="KW-1185">Reference proteome</keyword>
<keyword id="KW-0686">Riboflavin biosynthesis</keyword>
<name>RIBB_DESPS</name>
<feature type="chain" id="PRO_1000040602" description="3,4-dihydroxy-2-butanone 4-phosphate synthase">
    <location>
        <begin position="1"/>
        <end position="214"/>
    </location>
</feature>
<feature type="binding site" evidence="1">
    <location>
        <begin position="37"/>
        <end position="38"/>
    </location>
    <ligand>
        <name>D-ribulose 5-phosphate</name>
        <dbReference type="ChEBI" id="CHEBI:58121"/>
    </ligand>
</feature>
<feature type="binding site" evidence="1">
    <location>
        <position position="38"/>
    </location>
    <ligand>
        <name>Mg(2+)</name>
        <dbReference type="ChEBI" id="CHEBI:18420"/>
        <label>1</label>
    </ligand>
</feature>
<feature type="binding site" evidence="1">
    <location>
        <position position="38"/>
    </location>
    <ligand>
        <name>Mg(2+)</name>
        <dbReference type="ChEBI" id="CHEBI:18420"/>
        <label>2</label>
    </ligand>
</feature>
<feature type="binding site" evidence="1">
    <location>
        <position position="42"/>
    </location>
    <ligand>
        <name>D-ribulose 5-phosphate</name>
        <dbReference type="ChEBI" id="CHEBI:58121"/>
    </ligand>
</feature>
<feature type="binding site" evidence="1">
    <location>
        <begin position="150"/>
        <end position="154"/>
    </location>
    <ligand>
        <name>D-ribulose 5-phosphate</name>
        <dbReference type="ChEBI" id="CHEBI:58121"/>
    </ligand>
</feature>
<feature type="binding site" evidence="1">
    <location>
        <position position="153"/>
    </location>
    <ligand>
        <name>Mg(2+)</name>
        <dbReference type="ChEBI" id="CHEBI:18420"/>
        <label>2</label>
    </ligand>
</feature>
<feature type="binding site" evidence="1">
    <location>
        <position position="174"/>
    </location>
    <ligand>
        <name>D-ribulose 5-phosphate</name>
        <dbReference type="ChEBI" id="CHEBI:58121"/>
    </ligand>
</feature>
<feature type="site" description="Essential for catalytic activity" evidence="1">
    <location>
        <position position="136"/>
    </location>
</feature>
<feature type="site" description="Essential for catalytic activity" evidence="1">
    <location>
        <position position="174"/>
    </location>
</feature>
<protein>
    <recommendedName>
        <fullName evidence="1">3,4-dihydroxy-2-butanone 4-phosphate synthase</fullName>
        <shortName evidence="1">DHBP synthase</shortName>
        <ecNumber evidence="1">4.1.99.12</ecNumber>
    </recommendedName>
</protein>
<dbReference type="EC" id="4.1.99.12" evidence="1"/>
<dbReference type="EMBL" id="CR522870">
    <property type="protein sequence ID" value="CAG35430.1"/>
    <property type="molecule type" value="Genomic_DNA"/>
</dbReference>
<dbReference type="RefSeq" id="WP_011187946.1">
    <property type="nucleotide sequence ID" value="NC_006138.1"/>
</dbReference>
<dbReference type="SMR" id="Q6AQE3"/>
<dbReference type="STRING" id="177439.DP0701"/>
<dbReference type="KEGG" id="dps:DP0701"/>
<dbReference type="eggNOG" id="COG0108">
    <property type="taxonomic scope" value="Bacteria"/>
</dbReference>
<dbReference type="HOGENOM" id="CLU_020273_3_0_7"/>
<dbReference type="OrthoDB" id="9793111at2"/>
<dbReference type="UniPathway" id="UPA00275">
    <property type="reaction ID" value="UER00399"/>
</dbReference>
<dbReference type="Proteomes" id="UP000000602">
    <property type="component" value="Chromosome"/>
</dbReference>
<dbReference type="GO" id="GO:0005829">
    <property type="term" value="C:cytosol"/>
    <property type="evidence" value="ECO:0007669"/>
    <property type="project" value="TreeGrafter"/>
</dbReference>
<dbReference type="GO" id="GO:0008686">
    <property type="term" value="F:3,4-dihydroxy-2-butanone-4-phosphate synthase activity"/>
    <property type="evidence" value="ECO:0007669"/>
    <property type="project" value="UniProtKB-UniRule"/>
</dbReference>
<dbReference type="GO" id="GO:0000287">
    <property type="term" value="F:magnesium ion binding"/>
    <property type="evidence" value="ECO:0007669"/>
    <property type="project" value="UniProtKB-UniRule"/>
</dbReference>
<dbReference type="GO" id="GO:0030145">
    <property type="term" value="F:manganese ion binding"/>
    <property type="evidence" value="ECO:0007669"/>
    <property type="project" value="UniProtKB-UniRule"/>
</dbReference>
<dbReference type="GO" id="GO:0009231">
    <property type="term" value="P:riboflavin biosynthetic process"/>
    <property type="evidence" value="ECO:0007669"/>
    <property type="project" value="UniProtKB-UniRule"/>
</dbReference>
<dbReference type="FunFam" id="3.90.870.10:FF:000002">
    <property type="entry name" value="3,4-dihydroxy-2-butanone 4-phosphate synthase"/>
    <property type="match status" value="1"/>
</dbReference>
<dbReference type="Gene3D" id="3.90.870.10">
    <property type="entry name" value="DHBP synthase"/>
    <property type="match status" value="1"/>
</dbReference>
<dbReference type="HAMAP" id="MF_00180">
    <property type="entry name" value="RibB"/>
    <property type="match status" value="1"/>
</dbReference>
<dbReference type="InterPro" id="IPR017945">
    <property type="entry name" value="DHBP_synth_RibB-like_a/b_dom"/>
</dbReference>
<dbReference type="InterPro" id="IPR000422">
    <property type="entry name" value="DHBP_synthase_RibB"/>
</dbReference>
<dbReference type="NCBIfam" id="TIGR00506">
    <property type="entry name" value="ribB"/>
    <property type="match status" value="1"/>
</dbReference>
<dbReference type="PANTHER" id="PTHR21327:SF38">
    <property type="entry name" value="3,4-DIHYDROXY-2-BUTANONE 4-PHOSPHATE SYNTHASE"/>
    <property type="match status" value="1"/>
</dbReference>
<dbReference type="PANTHER" id="PTHR21327">
    <property type="entry name" value="GTP CYCLOHYDROLASE II-RELATED"/>
    <property type="match status" value="1"/>
</dbReference>
<dbReference type="Pfam" id="PF00926">
    <property type="entry name" value="DHBP_synthase"/>
    <property type="match status" value="1"/>
</dbReference>
<dbReference type="SUPFAM" id="SSF55821">
    <property type="entry name" value="YrdC/RibB"/>
    <property type="match status" value="1"/>
</dbReference>
<sequence length="214" mass="23173">MGQSLLSSFGDAQQRVEKSLQALRQGEGVLLVDDEDRENEGDLIYSAEHLTAKQMALMIREGSGIVCLCLTGEKVDELKLPQMVTNNNSRHGTGFTISIEARDGVTTGVSAADRTQTVKAAIAEGAVAEDLCQPGHVFPLRARDNGVLDRRGHTEGTVDLMKLSGLAPAGLLCELTNVDGTMARLPEIVDFARKRDMQVLSIEDIAQYRQGHNL</sequence>
<comment type="function">
    <text evidence="1">Catalyzes the conversion of D-ribulose 5-phosphate to formate and 3,4-dihydroxy-2-butanone 4-phosphate.</text>
</comment>
<comment type="catalytic activity">
    <reaction evidence="1">
        <text>D-ribulose 5-phosphate = (2S)-2-hydroxy-3-oxobutyl phosphate + formate + H(+)</text>
        <dbReference type="Rhea" id="RHEA:18457"/>
        <dbReference type="ChEBI" id="CHEBI:15378"/>
        <dbReference type="ChEBI" id="CHEBI:15740"/>
        <dbReference type="ChEBI" id="CHEBI:58121"/>
        <dbReference type="ChEBI" id="CHEBI:58830"/>
        <dbReference type="EC" id="4.1.99.12"/>
    </reaction>
</comment>
<comment type="cofactor">
    <cofactor evidence="1">
        <name>Mg(2+)</name>
        <dbReference type="ChEBI" id="CHEBI:18420"/>
    </cofactor>
    <cofactor evidence="1">
        <name>Mn(2+)</name>
        <dbReference type="ChEBI" id="CHEBI:29035"/>
    </cofactor>
    <text evidence="1">Binds 2 divalent metal cations per subunit. Magnesium or manganese.</text>
</comment>
<comment type="pathway">
    <text evidence="1">Cofactor biosynthesis; riboflavin biosynthesis; 2-hydroxy-3-oxobutyl phosphate from D-ribulose 5-phosphate: step 1/1.</text>
</comment>
<comment type="subunit">
    <text evidence="1">Homodimer.</text>
</comment>
<comment type="similarity">
    <text evidence="1">Belongs to the DHBP synthase family.</text>
</comment>
<evidence type="ECO:0000255" key="1">
    <source>
        <dbReference type="HAMAP-Rule" id="MF_00180"/>
    </source>
</evidence>
<organism>
    <name type="scientific">Desulfotalea psychrophila (strain LSv54 / DSM 12343)</name>
    <dbReference type="NCBI Taxonomy" id="177439"/>
    <lineage>
        <taxon>Bacteria</taxon>
        <taxon>Pseudomonadati</taxon>
        <taxon>Thermodesulfobacteriota</taxon>
        <taxon>Desulfobulbia</taxon>
        <taxon>Desulfobulbales</taxon>
        <taxon>Desulfocapsaceae</taxon>
        <taxon>Desulfotalea</taxon>
    </lineage>
</organism>
<gene>
    <name evidence="1" type="primary">ribB</name>
    <name type="ordered locus">DP0701</name>
</gene>